<sequence length="460" mass="51410">MSLTAVETAAGTSQRLNAMPQTMPEAMPHPHATTIMKWAPDTHYPPQGPVHSYYDQHLYSPTGQLIVGPDHRRPSQLQQHQHPRTGHGYQLNGMPGSVPQNQPHPPHSHPQSGLYATDHTAGQQAGPPQAPSAILQRNSEMLDHAQGRHPVYAPRSHSVSEDQPPTSVHGQHRPSIDMCAVPPFTEYHFNPPVTTNGRPPDSNSPMVSPTGLRPDPMRIADILTTGERSRSRTSVDNRLSDNRFNLQIRQQPVAARSCGFGERDRRVIDPPPIVQLLIKDDSLTKEEIAKHLRYPHYVMSCSIFDESGSCDASFMPEEYRQQRRLMGLLVSAPFVGKDEHGEEGCFFCFPDLSCRTPGSFRLHFTLVKIDPIRAKEVKRFPTLVTAQSEVFTVYTAKDFPGMQASTKLTKRLKEQGCIISIKKGNDRSKNTRSHDDSSDGEQDEGEATLQGKRRRRSARQ</sequence>
<proteinExistence type="evidence at protein level"/>
<feature type="chain" id="PRO_0000435792" description="Sexual development regulator velC">
    <location>
        <begin position="1"/>
        <end position="460"/>
    </location>
</feature>
<feature type="domain" description="Velvet" evidence="2">
    <location>
        <begin position="239"/>
        <end position="422"/>
    </location>
</feature>
<feature type="region of interest" description="Disordered" evidence="3">
    <location>
        <begin position="67"/>
        <end position="131"/>
    </location>
</feature>
<feature type="region of interest" description="Disordered" evidence="3">
    <location>
        <begin position="152"/>
        <end position="216"/>
    </location>
</feature>
<feature type="region of interest" description="Disordered" evidence="3">
    <location>
        <begin position="422"/>
        <end position="460"/>
    </location>
</feature>
<feature type="compositionally biased region" description="Polar residues" evidence="3">
    <location>
        <begin position="192"/>
        <end position="207"/>
    </location>
</feature>
<feature type="compositionally biased region" description="Basic and acidic residues" evidence="3">
    <location>
        <begin position="423"/>
        <end position="437"/>
    </location>
</feature>
<feature type="compositionally biased region" description="Basic residues" evidence="3">
    <location>
        <begin position="451"/>
        <end position="460"/>
    </location>
</feature>
<name>VELC_GIBM7</name>
<keyword id="KW-0539">Nucleus</keyword>
<keyword id="KW-1185">Reference proteome</keyword>
<keyword id="KW-0749">Sporulation</keyword>
<keyword id="KW-0804">Transcription</keyword>
<keyword id="KW-0805">Transcription regulation</keyword>
<comment type="function">
    <text evidence="1 4">Velvet-domain-containing protein that acts as a positive regulator of sexual development (By similarity). Dispensable for regulation of conidial size, hyphal hydrophobicity, fumonisin production, and oxidant resistance (PubMed:24792348).</text>
</comment>
<comment type="subunit">
    <text evidence="4">Interacts with VE1 (PubMed:24792348).</text>
</comment>
<comment type="subcellular location">
    <subcellularLocation>
        <location evidence="6">Nucleus</location>
    </subcellularLocation>
</comment>
<comment type="similarity">
    <text evidence="6">Belongs to the velvet family. VelC subfamily.</text>
</comment>
<accession>W7MGR9</accession>
<dbReference type="EMBL" id="CM000580">
    <property type="protein sequence ID" value="EWG43982.1"/>
    <property type="molecule type" value="Genomic_DNA"/>
</dbReference>
<dbReference type="RefSeq" id="XP_018750173.1">
    <property type="nucleotide sequence ID" value="XM_018893331.1"/>
</dbReference>
<dbReference type="SMR" id="W7MGR9"/>
<dbReference type="STRING" id="334819.W7MGR9"/>
<dbReference type="GeneID" id="30063223"/>
<dbReference type="KEGG" id="fvr:FVEG_05214"/>
<dbReference type="VEuPathDB" id="FungiDB:FVEG_05214"/>
<dbReference type="eggNOG" id="ENOG502RYR6">
    <property type="taxonomic scope" value="Eukaryota"/>
</dbReference>
<dbReference type="OrthoDB" id="108296at110618"/>
<dbReference type="Proteomes" id="UP000009096">
    <property type="component" value="Chromosome 3"/>
</dbReference>
<dbReference type="GO" id="GO:0005634">
    <property type="term" value="C:nucleus"/>
    <property type="evidence" value="ECO:0007669"/>
    <property type="project" value="UniProtKB-SubCell"/>
</dbReference>
<dbReference type="GO" id="GO:0030435">
    <property type="term" value="P:sporulation resulting in formation of a cellular spore"/>
    <property type="evidence" value="ECO:0007669"/>
    <property type="project" value="UniProtKB-KW"/>
</dbReference>
<dbReference type="Gene3D" id="2.60.40.3960">
    <property type="entry name" value="Velvet domain"/>
    <property type="match status" value="1"/>
</dbReference>
<dbReference type="InterPro" id="IPR021740">
    <property type="entry name" value="Velvet"/>
</dbReference>
<dbReference type="InterPro" id="IPR037525">
    <property type="entry name" value="Velvet_dom"/>
</dbReference>
<dbReference type="InterPro" id="IPR038491">
    <property type="entry name" value="Velvet_dom_sf"/>
</dbReference>
<dbReference type="PANTHER" id="PTHR33572:SF17">
    <property type="entry name" value="SEXUAL DEVELOPMENT REGULATOR VELC"/>
    <property type="match status" value="1"/>
</dbReference>
<dbReference type="PANTHER" id="PTHR33572">
    <property type="entry name" value="SPORE DEVELOPMENT REGULATOR VOSA"/>
    <property type="match status" value="1"/>
</dbReference>
<dbReference type="Pfam" id="PF11754">
    <property type="entry name" value="Velvet"/>
    <property type="match status" value="2"/>
</dbReference>
<dbReference type="PROSITE" id="PS51821">
    <property type="entry name" value="VELVET"/>
    <property type="match status" value="1"/>
</dbReference>
<gene>
    <name evidence="5" type="primary">velC</name>
    <name type="ORF">FVEG_05214</name>
</gene>
<protein>
    <recommendedName>
        <fullName evidence="6">Sexual development regulator velC</fullName>
    </recommendedName>
</protein>
<evidence type="ECO:0000250" key="1">
    <source>
        <dbReference type="UniProtKB" id="Q5BBM1"/>
    </source>
</evidence>
<evidence type="ECO:0000255" key="2">
    <source>
        <dbReference type="PROSITE-ProRule" id="PRU01165"/>
    </source>
</evidence>
<evidence type="ECO:0000256" key="3">
    <source>
        <dbReference type="SAM" id="MobiDB-lite"/>
    </source>
</evidence>
<evidence type="ECO:0000269" key="4">
    <source>
    </source>
</evidence>
<evidence type="ECO:0000303" key="5">
    <source>
    </source>
</evidence>
<evidence type="ECO:0000305" key="6"/>
<organism>
    <name type="scientific">Gibberella moniliformis (strain M3125 / FGSC 7600)</name>
    <name type="common">Maize ear and stalk rot fungus</name>
    <name type="synonym">Fusarium verticillioides</name>
    <dbReference type="NCBI Taxonomy" id="334819"/>
    <lineage>
        <taxon>Eukaryota</taxon>
        <taxon>Fungi</taxon>
        <taxon>Dikarya</taxon>
        <taxon>Ascomycota</taxon>
        <taxon>Pezizomycotina</taxon>
        <taxon>Sordariomycetes</taxon>
        <taxon>Hypocreomycetidae</taxon>
        <taxon>Hypocreales</taxon>
        <taxon>Nectriaceae</taxon>
        <taxon>Fusarium</taxon>
        <taxon>Fusarium fujikuroi species complex</taxon>
    </lineage>
</organism>
<reference key="1">
    <citation type="journal article" date="2010" name="Nature">
        <title>Comparative genomics reveals mobile pathogenicity chromosomes in Fusarium.</title>
        <authorList>
            <person name="Ma L.-J."/>
            <person name="van der Does H.C."/>
            <person name="Borkovich K.A."/>
            <person name="Coleman J.J."/>
            <person name="Daboussi M.-J."/>
            <person name="Di Pietro A."/>
            <person name="Dufresne M."/>
            <person name="Freitag M."/>
            <person name="Grabherr M."/>
            <person name="Henrissat B."/>
            <person name="Houterman P.M."/>
            <person name="Kang S."/>
            <person name="Shim W.-B."/>
            <person name="Woloshuk C."/>
            <person name="Xie X."/>
            <person name="Xu J.-R."/>
            <person name="Antoniw J."/>
            <person name="Baker S.E."/>
            <person name="Bluhm B.H."/>
            <person name="Breakspear A."/>
            <person name="Brown D.W."/>
            <person name="Butchko R.A.E."/>
            <person name="Chapman S."/>
            <person name="Coulson R."/>
            <person name="Coutinho P.M."/>
            <person name="Danchin E.G.J."/>
            <person name="Diener A."/>
            <person name="Gale L.R."/>
            <person name="Gardiner D.M."/>
            <person name="Goff S."/>
            <person name="Hammond-Kosack K.E."/>
            <person name="Hilburn K."/>
            <person name="Hua-Van A."/>
            <person name="Jonkers W."/>
            <person name="Kazan K."/>
            <person name="Kodira C.D."/>
            <person name="Koehrsen M."/>
            <person name="Kumar L."/>
            <person name="Lee Y.-H."/>
            <person name="Li L."/>
            <person name="Manners J.M."/>
            <person name="Miranda-Saavedra D."/>
            <person name="Mukherjee M."/>
            <person name="Park G."/>
            <person name="Park J."/>
            <person name="Park S.-Y."/>
            <person name="Proctor R.H."/>
            <person name="Regev A."/>
            <person name="Ruiz-Roldan M.C."/>
            <person name="Sain D."/>
            <person name="Sakthikumar S."/>
            <person name="Sykes S."/>
            <person name="Schwartz D.C."/>
            <person name="Turgeon B.G."/>
            <person name="Wapinski I."/>
            <person name="Yoder O."/>
            <person name="Young S."/>
            <person name="Zeng Q."/>
            <person name="Zhou S."/>
            <person name="Galagan J."/>
            <person name="Cuomo C.A."/>
            <person name="Kistler H.C."/>
            <person name="Rep M."/>
        </authorList>
    </citation>
    <scope>NUCLEOTIDE SEQUENCE [LARGE SCALE GENOMIC DNA]</scope>
    <source>
        <strain>M3125 / FGSC 7600</strain>
    </source>
</reference>
<reference key="2">
    <citation type="journal article" date="2014" name="Eukaryot. Cell">
        <title>Coordinated and distinct functions of velvet proteins in Fusarium verticillioides.</title>
        <authorList>
            <person name="Lan N."/>
            <person name="Zhang H."/>
            <person name="Hu C."/>
            <person name="Wang W."/>
            <person name="Calvo A.M."/>
            <person name="Harris S.D."/>
            <person name="Chen S."/>
            <person name="Li S."/>
        </authorList>
    </citation>
    <scope>IDENTIFICATION BY MASS SPECTROMETRY</scope>
    <scope>INTERACTION WITH VE1</scope>
    <scope>FUNCTION</scope>
</reference>